<evidence type="ECO:0000256" key="1">
    <source>
        <dbReference type="SAM" id="MobiDB-lite"/>
    </source>
</evidence>
<organism>
    <name type="scientific">Mycobacterium tuberculosis (strain ATCC 25618 / H37Rv)</name>
    <dbReference type="NCBI Taxonomy" id="83332"/>
    <lineage>
        <taxon>Bacteria</taxon>
        <taxon>Bacillati</taxon>
        <taxon>Actinomycetota</taxon>
        <taxon>Actinomycetes</taxon>
        <taxon>Mycobacteriales</taxon>
        <taxon>Mycobacteriaceae</taxon>
        <taxon>Mycobacterium</taxon>
        <taxon>Mycobacterium tuberculosis complex</taxon>
    </lineage>
</organism>
<protein>
    <recommendedName>
        <fullName>Uncharacterized protein Rv2086</fullName>
    </recommendedName>
</protein>
<feature type="chain" id="PRO_0000103958" description="Uncharacterized protein Rv2086">
    <location>
        <begin position="1"/>
        <end position="201"/>
    </location>
</feature>
<feature type="region of interest" description="Disordered" evidence="1">
    <location>
        <begin position="121"/>
        <end position="141"/>
    </location>
</feature>
<accession>P64937</accession>
<accession>L0TA59</accession>
<accession>Q10694</accession>
<reference key="1">
    <citation type="journal article" date="1998" name="Nature">
        <title>Deciphering the biology of Mycobacterium tuberculosis from the complete genome sequence.</title>
        <authorList>
            <person name="Cole S.T."/>
            <person name="Brosch R."/>
            <person name="Parkhill J."/>
            <person name="Garnier T."/>
            <person name="Churcher C.M."/>
            <person name="Harris D.E."/>
            <person name="Gordon S.V."/>
            <person name="Eiglmeier K."/>
            <person name="Gas S."/>
            <person name="Barry C.E. III"/>
            <person name="Tekaia F."/>
            <person name="Badcock K."/>
            <person name="Basham D."/>
            <person name="Brown D."/>
            <person name="Chillingworth T."/>
            <person name="Connor R."/>
            <person name="Davies R.M."/>
            <person name="Devlin K."/>
            <person name="Feltwell T."/>
            <person name="Gentles S."/>
            <person name="Hamlin N."/>
            <person name="Holroyd S."/>
            <person name="Hornsby T."/>
            <person name="Jagels K."/>
            <person name="Krogh A."/>
            <person name="McLean J."/>
            <person name="Moule S."/>
            <person name="Murphy L.D."/>
            <person name="Oliver S."/>
            <person name="Osborne J."/>
            <person name="Quail M.A."/>
            <person name="Rajandream M.A."/>
            <person name="Rogers J."/>
            <person name="Rutter S."/>
            <person name="Seeger K."/>
            <person name="Skelton S."/>
            <person name="Squares S."/>
            <person name="Squares R."/>
            <person name="Sulston J.E."/>
            <person name="Taylor K."/>
            <person name="Whitehead S."/>
            <person name="Barrell B.G."/>
        </authorList>
    </citation>
    <scope>NUCLEOTIDE SEQUENCE [LARGE SCALE GENOMIC DNA]</scope>
    <source>
        <strain>ATCC 25618 / H37Rv</strain>
    </source>
</reference>
<dbReference type="EMBL" id="AL123456">
    <property type="protein sequence ID" value="CCP44861.1"/>
    <property type="molecule type" value="Genomic_DNA"/>
</dbReference>
<dbReference type="PIR" id="A70767">
    <property type="entry name" value="A70767"/>
</dbReference>
<dbReference type="RefSeq" id="NP_216602.2">
    <property type="nucleotide sequence ID" value="NC_000962.3"/>
</dbReference>
<dbReference type="RefSeq" id="WP_003899164.1">
    <property type="nucleotide sequence ID" value="NC_000962.3"/>
</dbReference>
<dbReference type="STRING" id="83332.Rv2086"/>
<dbReference type="PaxDb" id="83332-Rv2086"/>
<dbReference type="DNASU" id="888128"/>
<dbReference type="GeneID" id="888128"/>
<dbReference type="KEGG" id="mtu:Rv2086"/>
<dbReference type="KEGG" id="mtv:RVBD_2086"/>
<dbReference type="TubercuList" id="Rv2086"/>
<dbReference type="eggNOG" id="COG2801">
    <property type="taxonomic scope" value="Bacteria"/>
</dbReference>
<dbReference type="InParanoid" id="P64937"/>
<dbReference type="OrthoDB" id="4281720at2"/>
<dbReference type="PhylomeDB" id="P64937"/>
<dbReference type="Proteomes" id="UP000001584">
    <property type="component" value="Chromosome"/>
</dbReference>
<proteinExistence type="predicted"/>
<keyword id="KW-1185">Reference proteome</keyword>
<gene>
    <name type="ordered locus">Rv2086</name>
    <name type="ORF">MTCY49.27</name>
</gene>
<sequence>MRPATPLICAFGDKHKHTYGVTPICRALAVHGVQIASRTYFADRAAAPSKRALWDTTITEILAGYYEPDAEGKRPPECLYGSLKMWAHLQRQGFRWPSATVKTIMRANGWRGVPLAAHITHHRTRPGRGPGPRPGGSAMAGFSNEPAGSGRLHLRADDVEFRLHRVRGRRLRRCDRGLGMLADQRRSVRRTRITPRPSRLT</sequence>
<name>Y2086_MYCTU</name>